<feature type="chain" id="PRO_0000184599" description="Transmembrane and coiled-coil domain protein 3">
    <location>
        <begin position="1"/>
        <end position="477"/>
    </location>
</feature>
<feature type="transmembrane region" description="Helical" evidence="2">
    <location>
        <begin position="417"/>
        <end position="437"/>
    </location>
</feature>
<feature type="transmembrane region" description="Helical" evidence="2">
    <location>
        <begin position="450"/>
        <end position="470"/>
    </location>
</feature>
<feature type="region of interest" description="Disordered" evidence="3">
    <location>
        <begin position="168"/>
        <end position="188"/>
    </location>
</feature>
<feature type="region of interest" description="Disordered" evidence="3">
    <location>
        <begin position="249"/>
        <end position="277"/>
    </location>
</feature>
<feature type="coiled-coil region" evidence="2">
    <location>
        <begin position="112"/>
        <end position="153"/>
    </location>
</feature>
<feature type="coiled-coil region" evidence="2">
    <location>
        <begin position="282"/>
        <end position="398"/>
    </location>
</feature>
<feature type="compositionally biased region" description="Polar residues" evidence="3">
    <location>
        <begin position="258"/>
        <end position="273"/>
    </location>
</feature>
<feature type="modified residue" description="Phosphoserine" evidence="1">
    <location>
        <position position="46"/>
    </location>
</feature>
<feature type="modified residue" description="Phosphoserine" evidence="1">
    <location>
        <position position="253"/>
    </location>
</feature>
<feature type="sequence variant" id="VAR_063144" description="In dbSNP:rs1274523." evidence="4">
    <original>Y</original>
    <variation>D</variation>
    <location>
        <position position="16"/>
    </location>
</feature>
<feature type="sequence variant" id="VAR_063145" description="In dbSNP:rs17854038." evidence="4">
    <original>P</original>
    <variation>Q</variation>
    <location>
        <position position="232"/>
    </location>
</feature>
<feature type="sequence conflict" description="In Ref. 3; BAA86459." evidence="10" ref="3">
    <original>DRTYSYPGRHHRCKSR</original>
    <variation>ASCRSCSAPGFAVWPL</variation>
    <location>
        <begin position="11"/>
        <end position="26"/>
    </location>
</feature>
<protein>
    <recommendedName>
        <fullName evidence="9">Transmembrane and coiled-coil domain protein 3</fullName>
    </recommendedName>
</protein>
<accession>Q9ULS5</accession>
<accession>Q8IWB2</accession>
<keyword id="KW-0175">Coiled coil</keyword>
<keyword id="KW-0256">Endoplasmic reticulum</keyword>
<keyword id="KW-0472">Membrane</keyword>
<keyword id="KW-0597">Phosphoprotein</keyword>
<keyword id="KW-1267">Proteomics identification</keyword>
<keyword id="KW-1185">Reference proteome</keyword>
<keyword id="KW-0812">Transmembrane</keyword>
<keyword id="KW-1133">Transmembrane helix</keyword>
<sequence>MPGSDTALTVDRTYSYPGRHHRCKSRVERHDMNTLSLPLNIRRGGSDTNLNFDVPDGILDFHKVKLTADSLKQKILKVTEQIKIEQTSRDGNVAEYLKLVNNADKQQAGRIKQVFEKKNQKSAHSIAQLQKKLEQYHRKLREIEQNGASRSSKDISKDHLKDIHRSLKDAHVKSRTAPHCMESSKSGMPGVSLTPPVFVFNKSREFANLIRNKFGSADNIAHLKNSLEEFRPEASARAYGGSATIVNKPKYGSDDECSSGTSGSADSNGNQSFGAGGASTLDSQGKLAVILEELREIKDTQAQLAEDIEALKVQFKREYGFISQTLQEERYRYERLEDQLHDLTDLHQHETANLKQELASIEEKVAYQAYERSRDIQEALESCQTRISKLELHQQEQQALQTDTVNAKVLLGRCINVILAFMTVILVCVSTIAKFVSPMMKSRCHILGTFFAVTLLAIFCKNWDHILCAIERMIIPR</sequence>
<proteinExistence type="evidence at protein level"/>
<comment type="subunit">
    <text evidence="5">May form homodimers and heterodimers with TMCC2 or TMCC3 via the coiled-coil domains (PubMed:24454821). Interacts with ribosomal proteins RPL4 and RPS6 (PubMed:24454821).</text>
</comment>
<comment type="interaction">
    <interactant intactId="EBI-2800326">
        <id>Q9ULS5</id>
    </interactant>
    <interactant intactId="EBI-751954">
        <id>O15482</id>
        <label>TEX28P2</label>
    </interactant>
    <organismsDiffer>false</organismsDiffer>
    <experiments>6</experiments>
</comment>
<comment type="subcellular location">
    <subcellularLocation>
        <location evidence="5 7">Endoplasmic reticulum membrane</location>
        <topology evidence="2">Multi-pass membrane protein</topology>
    </subcellularLocation>
    <text evidence="7">Concentrates in discrete patches along peripheral endoplasmic reticulum tubules.</text>
</comment>
<comment type="tissue specificity">
    <text evidence="6">Widely expressed, with highest levels in brain, spinal cord and testis.</text>
</comment>
<comment type="similarity">
    <text evidence="10">Belongs to the TEX28 family.</text>
</comment>
<reference key="1">
    <citation type="journal article" date="2006" name="Nature">
        <title>The finished DNA sequence of human chromosome 12.</title>
        <authorList>
            <person name="Scherer S.E."/>
            <person name="Muzny D.M."/>
            <person name="Buhay C.J."/>
            <person name="Chen R."/>
            <person name="Cree A."/>
            <person name="Ding Y."/>
            <person name="Dugan-Rocha S."/>
            <person name="Gill R."/>
            <person name="Gunaratne P."/>
            <person name="Harris R.A."/>
            <person name="Hawes A.C."/>
            <person name="Hernandez J."/>
            <person name="Hodgson A.V."/>
            <person name="Hume J."/>
            <person name="Jackson A."/>
            <person name="Khan Z.M."/>
            <person name="Kovar-Smith C."/>
            <person name="Lewis L.R."/>
            <person name="Lozado R.J."/>
            <person name="Metzker M.L."/>
            <person name="Milosavljevic A."/>
            <person name="Miner G.R."/>
            <person name="Montgomery K.T."/>
            <person name="Morgan M.B."/>
            <person name="Nazareth L.V."/>
            <person name="Scott G."/>
            <person name="Sodergren E."/>
            <person name="Song X.-Z."/>
            <person name="Steffen D."/>
            <person name="Lovering R.C."/>
            <person name="Wheeler D.A."/>
            <person name="Worley K.C."/>
            <person name="Yuan Y."/>
            <person name="Zhang Z."/>
            <person name="Adams C.Q."/>
            <person name="Ansari-Lari M.A."/>
            <person name="Ayele M."/>
            <person name="Brown M.J."/>
            <person name="Chen G."/>
            <person name="Chen Z."/>
            <person name="Clerc-Blankenburg K.P."/>
            <person name="Davis C."/>
            <person name="Delgado O."/>
            <person name="Dinh H.H."/>
            <person name="Draper H."/>
            <person name="Gonzalez-Garay M.L."/>
            <person name="Havlak P."/>
            <person name="Jackson L.R."/>
            <person name="Jacob L.S."/>
            <person name="Kelly S.H."/>
            <person name="Li L."/>
            <person name="Li Z."/>
            <person name="Liu J."/>
            <person name="Liu W."/>
            <person name="Lu J."/>
            <person name="Maheshwari M."/>
            <person name="Nguyen B.-V."/>
            <person name="Okwuonu G.O."/>
            <person name="Pasternak S."/>
            <person name="Perez L.M."/>
            <person name="Plopper F.J.H."/>
            <person name="Santibanez J."/>
            <person name="Shen H."/>
            <person name="Tabor P.E."/>
            <person name="Verduzco D."/>
            <person name="Waldron L."/>
            <person name="Wang Q."/>
            <person name="Williams G.A."/>
            <person name="Zhang J."/>
            <person name="Zhou J."/>
            <person name="Allen C.C."/>
            <person name="Amin A.G."/>
            <person name="Anyalebechi V."/>
            <person name="Bailey M."/>
            <person name="Barbaria J.A."/>
            <person name="Bimage K.E."/>
            <person name="Bryant N.P."/>
            <person name="Burch P.E."/>
            <person name="Burkett C.E."/>
            <person name="Burrell K.L."/>
            <person name="Calderon E."/>
            <person name="Cardenas V."/>
            <person name="Carter K."/>
            <person name="Casias K."/>
            <person name="Cavazos I."/>
            <person name="Cavazos S.R."/>
            <person name="Ceasar H."/>
            <person name="Chacko J."/>
            <person name="Chan S.N."/>
            <person name="Chavez D."/>
            <person name="Christopoulos C."/>
            <person name="Chu J."/>
            <person name="Cockrell R."/>
            <person name="Cox C.D."/>
            <person name="Dang M."/>
            <person name="Dathorne S.R."/>
            <person name="David R."/>
            <person name="Davis C.M."/>
            <person name="Davy-Carroll L."/>
            <person name="Deshazo D.R."/>
            <person name="Donlin J.E."/>
            <person name="D'Souza L."/>
            <person name="Eaves K.A."/>
            <person name="Egan A."/>
            <person name="Emery-Cohen A.J."/>
            <person name="Escotto M."/>
            <person name="Flagg N."/>
            <person name="Forbes L.D."/>
            <person name="Gabisi A.M."/>
            <person name="Garza M."/>
            <person name="Hamilton C."/>
            <person name="Henderson N."/>
            <person name="Hernandez O."/>
            <person name="Hines S."/>
            <person name="Hogues M.E."/>
            <person name="Huang M."/>
            <person name="Idlebird D.G."/>
            <person name="Johnson R."/>
            <person name="Jolivet A."/>
            <person name="Jones S."/>
            <person name="Kagan R."/>
            <person name="King L.M."/>
            <person name="Leal B."/>
            <person name="Lebow H."/>
            <person name="Lee S."/>
            <person name="LeVan J.M."/>
            <person name="Lewis L.C."/>
            <person name="London P."/>
            <person name="Lorensuhewa L.M."/>
            <person name="Loulseged H."/>
            <person name="Lovett D.A."/>
            <person name="Lucier A."/>
            <person name="Lucier R.L."/>
            <person name="Ma J."/>
            <person name="Madu R.C."/>
            <person name="Mapua P."/>
            <person name="Martindale A.D."/>
            <person name="Martinez E."/>
            <person name="Massey E."/>
            <person name="Mawhiney S."/>
            <person name="Meador M.G."/>
            <person name="Mendez S."/>
            <person name="Mercado C."/>
            <person name="Mercado I.C."/>
            <person name="Merritt C.E."/>
            <person name="Miner Z.L."/>
            <person name="Minja E."/>
            <person name="Mitchell T."/>
            <person name="Mohabbat F."/>
            <person name="Mohabbat K."/>
            <person name="Montgomery B."/>
            <person name="Moore N."/>
            <person name="Morris S."/>
            <person name="Munidasa M."/>
            <person name="Ngo R.N."/>
            <person name="Nguyen N.B."/>
            <person name="Nickerson E."/>
            <person name="Nwaokelemeh O.O."/>
            <person name="Nwokenkwo S."/>
            <person name="Obregon M."/>
            <person name="Oguh M."/>
            <person name="Oragunye N."/>
            <person name="Oviedo R.J."/>
            <person name="Parish B.J."/>
            <person name="Parker D.N."/>
            <person name="Parrish J."/>
            <person name="Parks K.L."/>
            <person name="Paul H.A."/>
            <person name="Payton B.A."/>
            <person name="Perez A."/>
            <person name="Perrin W."/>
            <person name="Pickens A."/>
            <person name="Primus E.L."/>
            <person name="Pu L.-L."/>
            <person name="Puazo M."/>
            <person name="Quiles M.M."/>
            <person name="Quiroz J.B."/>
            <person name="Rabata D."/>
            <person name="Reeves K."/>
            <person name="Ruiz S.J."/>
            <person name="Shao H."/>
            <person name="Sisson I."/>
            <person name="Sonaike T."/>
            <person name="Sorelle R.P."/>
            <person name="Sutton A.E."/>
            <person name="Svatek A.F."/>
            <person name="Svetz L.A."/>
            <person name="Tamerisa K.S."/>
            <person name="Taylor T.R."/>
            <person name="Teague B."/>
            <person name="Thomas N."/>
            <person name="Thorn R.D."/>
            <person name="Trejos Z.Y."/>
            <person name="Trevino B.K."/>
            <person name="Ukegbu O.N."/>
            <person name="Urban J.B."/>
            <person name="Vasquez L.I."/>
            <person name="Vera V.A."/>
            <person name="Villasana D.M."/>
            <person name="Wang L."/>
            <person name="Ward-Moore S."/>
            <person name="Warren J.T."/>
            <person name="Wei X."/>
            <person name="White F."/>
            <person name="Williamson A.L."/>
            <person name="Wleczyk R."/>
            <person name="Wooden H.S."/>
            <person name="Wooden S.H."/>
            <person name="Yen J."/>
            <person name="Yoon L."/>
            <person name="Yoon V."/>
            <person name="Zorrilla S.E."/>
            <person name="Nelson D."/>
            <person name="Kucherlapati R."/>
            <person name="Weinstock G."/>
            <person name="Gibbs R.A."/>
        </authorList>
    </citation>
    <scope>NUCLEOTIDE SEQUENCE [LARGE SCALE GENOMIC DNA]</scope>
</reference>
<reference key="2">
    <citation type="journal article" date="2004" name="Genome Res.">
        <title>The status, quality, and expansion of the NIH full-length cDNA project: the Mammalian Gene Collection (MGC).</title>
        <authorList>
            <consortium name="The MGC Project Team"/>
        </authorList>
    </citation>
    <scope>NUCLEOTIDE SEQUENCE [LARGE SCALE MRNA]</scope>
    <scope>VARIANTS ASP-16 AND GLN-232</scope>
    <source>
        <tissue>Brain</tissue>
    </source>
</reference>
<reference key="3">
    <citation type="journal article" date="1999" name="DNA Res.">
        <title>Characterization of cDNA clones selected by the GeneMark analysis from size-fractionated cDNA libraries from human brain.</title>
        <authorList>
            <person name="Hirosawa M."/>
            <person name="Nagase T."/>
            <person name="Ishikawa K."/>
            <person name="Kikuno R."/>
            <person name="Nomura N."/>
            <person name="Ohara O."/>
        </authorList>
    </citation>
    <scope>NUCLEOTIDE SEQUENCE [LARGE SCALE MRNA] OF 11-477</scope>
    <source>
        <tissue>Brain</tissue>
    </source>
</reference>
<reference key="4">
    <citation type="journal article" date="2014" name="PLoS ONE">
        <title>Transmembrane and coiled-coil domain family 1 is a novel protein of the endoplasmic reticulum.</title>
        <authorList>
            <person name="Zhang C."/>
            <person name="Kho Y.S."/>
            <person name="Wang Z."/>
            <person name="Chiang Y.T."/>
            <person name="Ng G.K."/>
            <person name="Shaw P.C."/>
            <person name="Wang Y."/>
            <person name="Qi R.Z."/>
        </authorList>
    </citation>
    <scope>SUBCELLULAR LOCATION</scope>
    <scope>SUBUNIT</scope>
</reference>
<reference key="5">
    <citation type="journal article" date="2016" name="BMB Rep.">
        <title>Expression and characterization of transmembrane and coiled-coil domain family 3.</title>
        <authorList>
            <person name="Sohn W.J."/>
            <person name="Kim J.Y."/>
            <person name="Kim D."/>
            <person name="Park J.A."/>
            <person name="Lee Y."/>
            <person name="Kwon H.J."/>
        </authorList>
    </citation>
    <scope>TISSUE SPECIFICITY</scope>
</reference>
<reference key="6">
    <citation type="journal article" date="2018" name="Cell">
        <title>A novel class of ER membrane proteins regulates ER-associated endosome fission.</title>
        <authorList>
            <person name="Hoyer M.J."/>
            <person name="Chitwood P.J."/>
            <person name="Ebmeier C.C."/>
            <person name="Striepen J.F."/>
            <person name="Qi R.Z."/>
            <person name="Old W.M."/>
            <person name="Voeltz G.K."/>
        </authorList>
    </citation>
    <scope>SUBCELLULAR LOCATION</scope>
</reference>
<dbReference type="EMBL" id="AC026672">
    <property type="status" value="NOT_ANNOTATED_CDS"/>
    <property type="molecule type" value="Genomic_DNA"/>
</dbReference>
<dbReference type="EMBL" id="BC040535">
    <property type="protein sequence ID" value="AAH40535.1"/>
    <property type="molecule type" value="mRNA"/>
</dbReference>
<dbReference type="EMBL" id="AB032971">
    <property type="protein sequence ID" value="BAA86459.1"/>
    <property type="molecule type" value="mRNA"/>
</dbReference>
<dbReference type="CCDS" id="CCDS31877.1"/>
<dbReference type="RefSeq" id="NP_001287965.1">
    <property type="nucleotide sequence ID" value="NM_001301036.1"/>
</dbReference>
<dbReference type="RefSeq" id="NP_065749.3">
    <property type="nucleotide sequence ID" value="NM_020698.4"/>
</dbReference>
<dbReference type="SMR" id="Q9ULS5"/>
<dbReference type="BioGRID" id="121528">
    <property type="interactions" value="44"/>
</dbReference>
<dbReference type="FunCoup" id="Q9ULS5">
    <property type="interactions" value="1413"/>
</dbReference>
<dbReference type="IntAct" id="Q9ULS5">
    <property type="interactions" value="24"/>
</dbReference>
<dbReference type="MINT" id="Q9ULS5"/>
<dbReference type="STRING" id="9606.ENSP00000261226"/>
<dbReference type="TCDB" id="8.A.109.1.5">
    <property type="family name" value="the endoplasmic reticulum junction-forming protein (lunapark) family"/>
</dbReference>
<dbReference type="GlyGen" id="Q9ULS5">
    <property type="glycosylation" value="1 site, 1 O-linked glycan (1 site)"/>
</dbReference>
<dbReference type="iPTMnet" id="Q9ULS5"/>
<dbReference type="PhosphoSitePlus" id="Q9ULS5"/>
<dbReference type="SwissPalm" id="Q9ULS5"/>
<dbReference type="BioMuta" id="TMCC3"/>
<dbReference type="DMDM" id="296452938"/>
<dbReference type="jPOST" id="Q9ULS5"/>
<dbReference type="MassIVE" id="Q9ULS5"/>
<dbReference type="PaxDb" id="9606-ENSP00000261226"/>
<dbReference type="PeptideAtlas" id="Q9ULS5"/>
<dbReference type="ProteomicsDB" id="85102"/>
<dbReference type="Pumba" id="Q9ULS5"/>
<dbReference type="Antibodypedia" id="2821">
    <property type="antibodies" value="90 antibodies from 19 providers"/>
</dbReference>
<dbReference type="DNASU" id="57458"/>
<dbReference type="Ensembl" id="ENST00000261226.9">
    <property type="protein sequence ID" value="ENSP00000261226.4"/>
    <property type="gene ID" value="ENSG00000057704.13"/>
</dbReference>
<dbReference type="GeneID" id="57458"/>
<dbReference type="KEGG" id="hsa:57458"/>
<dbReference type="MANE-Select" id="ENST00000261226.9">
    <property type="protein sequence ID" value="ENSP00000261226.4"/>
    <property type="RefSeq nucleotide sequence ID" value="NM_020698.4"/>
    <property type="RefSeq protein sequence ID" value="NP_065749.3"/>
</dbReference>
<dbReference type="UCSC" id="uc001tdj.3">
    <property type="organism name" value="human"/>
</dbReference>
<dbReference type="AGR" id="HGNC:29199"/>
<dbReference type="CTD" id="57458"/>
<dbReference type="DisGeNET" id="57458"/>
<dbReference type="GeneCards" id="TMCC3"/>
<dbReference type="HGNC" id="HGNC:29199">
    <property type="gene designation" value="TMCC3"/>
</dbReference>
<dbReference type="HPA" id="ENSG00000057704">
    <property type="expression patterns" value="Low tissue specificity"/>
</dbReference>
<dbReference type="MIM" id="617459">
    <property type="type" value="gene"/>
</dbReference>
<dbReference type="neXtProt" id="NX_Q9ULS5"/>
<dbReference type="OpenTargets" id="ENSG00000057704"/>
<dbReference type="PharmGKB" id="PA134874359"/>
<dbReference type="VEuPathDB" id="HostDB:ENSG00000057704"/>
<dbReference type="eggNOG" id="KOG3850">
    <property type="taxonomic scope" value="Eukaryota"/>
</dbReference>
<dbReference type="GeneTree" id="ENSGT00940000157275"/>
<dbReference type="InParanoid" id="Q9ULS5"/>
<dbReference type="OMA" id="APHGMES"/>
<dbReference type="OrthoDB" id="9478613at2759"/>
<dbReference type="PAN-GO" id="Q9ULS5">
    <property type="GO annotations" value="1 GO annotation based on evolutionary models"/>
</dbReference>
<dbReference type="PhylomeDB" id="Q9ULS5"/>
<dbReference type="TreeFam" id="TF316292"/>
<dbReference type="PathwayCommons" id="Q9ULS5"/>
<dbReference type="SignaLink" id="Q9ULS5"/>
<dbReference type="BioGRID-ORCS" id="57458">
    <property type="hits" value="13 hits in 1145 CRISPR screens"/>
</dbReference>
<dbReference type="ChiTaRS" id="TMCC3">
    <property type="organism name" value="human"/>
</dbReference>
<dbReference type="GenomeRNAi" id="57458"/>
<dbReference type="Pharos" id="Q9ULS5">
    <property type="development level" value="Tdark"/>
</dbReference>
<dbReference type="PRO" id="PR:Q9ULS5"/>
<dbReference type="Proteomes" id="UP000005640">
    <property type="component" value="Chromosome 12"/>
</dbReference>
<dbReference type="RNAct" id="Q9ULS5">
    <property type="molecule type" value="protein"/>
</dbReference>
<dbReference type="Bgee" id="ENSG00000057704">
    <property type="expression patterns" value="Expressed in substantia nigra pars reticulata and 195 other cell types or tissues"/>
</dbReference>
<dbReference type="ExpressionAtlas" id="Q9ULS5">
    <property type="expression patterns" value="baseline and differential"/>
</dbReference>
<dbReference type="GO" id="GO:0012505">
    <property type="term" value="C:endomembrane system"/>
    <property type="evidence" value="ECO:0000318"/>
    <property type="project" value="GO_Central"/>
</dbReference>
<dbReference type="GO" id="GO:0005783">
    <property type="term" value="C:endoplasmic reticulum"/>
    <property type="evidence" value="ECO:0000314"/>
    <property type="project" value="MGI"/>
</dbReference>
<dbReference type="GO" id="GO:0005789">
    <property type="term" value="C:endoplasmic reticulum membrane"/>
    <property type="evidence" value="ECO:0007669"/>
    <property type="project" value="UniProtKB-SubCell"/>
</dbReference>
<dbReference type="GO" id="GO:0071889">
    <property type="term" value="F:14-3-3 protein binding"/>
    <property type="evidence" value="ECO:0000314"/>
    <property type="project" value="MGI"/>
</dbReference>
<dbReference type="GO" id="GO:0042802">
    <property type="term" value="F:identical protein binding"/>
    <property type="evidence" value="ECO:0000353"/>
    <property type="project" value="MGI"/>
</dbReference>
<dbReference type="InterPro" id="IPR019394">
    <property type="entry name" value="TEX28/TMCC"/>
</dbReference>
<dbReference type="PANTHER" id="PTHR17613">
    <property type="entry name" value="CEREBRAL PROTEIN-11-RELATED"/>
    <property type="match status" value="1"/>
</dbReference>
<dbReference type="PANTHER" id="PTHR17613:SF8">
    <property type="entry name" value="TRANSMEMBRANE AND COILED-COIL DOMAIN PROTEIN 3"/>
    <property type="match status" value="1"/>
</dbReference>
<dbReference type="Pfam" id="PF10267">
    <property type="entry name" value="Tmemb_cc2"/>
    <property type="match status" value="1"/>
</dbReference>
<evidence type="ECO:0000250" key="1">
    <source>
        <dbReference type="UniProtKB" id="Q8R310"/>
    </source>
</evidence>
<evidence type="ECO:0000255" key="2"/>
<evidence type="ECO:0000256" key="3">
    <source>
        <dbReference type="SAM" id="MobiDB-lite"/>
    </source>
</evidence>
<evidence type="ECO:0000269" key="4">
    <source>
    </source>
</evidence>
<evidence type="ECO:0000269" key="5">
    <source>
    </source>
</evidence>
<evidence type="ECO:0000269" key="6">
    <source>
    </source>
</evidence>
<evidence type="ECO:0000269" key="7">
    <source>
    </source>
</evidence>
<evidence type="ECO:0000303" key="8">
    <source>
    </source>
</evidence>
<evidence type="ECO:0000303" key="9">
    <source>
    </source>
</evidence>
<evidence type="ECO:0000305" key="10"/>
<gene>
    <name evidence="9" type="primary">TMCC3</name>
    <name evidence="8" type="synonym">KIAA1145</name>
</gene>
<organism>
    <name type="scientific">Homo sapiens</name>
    <name type="common">Human</name>
    <dbReference type="NCBI Taxonomy" id="9606"/>
    <lineage>
        <taxon>Eukaryota</taxon>
        <taxon>Metazoa</taxon>
        <taxon>Chordata</taxon>
        <taxon>Craniata</taxon>
        <taxon>Vertebrata</taxon>
        <taxon>Euteleostomi</taxon>
        <taxon>Mammalia</taxon>
        <taxon>Eutheria</taxon>
        <taxon>Euarchontoglires</taxon>
        <taxon>Primates</taxon>
        <taxon>Haplorrhini</taxon>
        <taxon>Catarrhini</taxon>
        <taxon>Hominidae</taxon>
        <taxon>Homo</taxon>
    </lineage>
</organism>
<name>TMCC3_HUMAN</name>